<comment type="function">
    <text evidence="12 13">Component of the mitochondrial ribosome (mitoribosome), a dedicated translation machinery responsible for the synthesis of mitochondrial genome-encoded proteins, including at least some of the essential transmembrane subunits of the mitochondrial respiratory chain. The mitoribosomes are attached to the mitochondrial inner membrane and translation products are cotranslationally integrated into the membrane.</text>
</comment>
<comment type="subunit">
    <text evidence="1 2 8">Component of the mitochondrial small ribosomal subunit (mt-SSU). Mature yeast 74S mitochondrial ribosomes consist of a small (37S) and a large (54S) subunit. The 37S small subunit contains a 15S ribosomal RNA (15S mt-rRNA) and 34 different proteins. The 54S large subunit contains a 21S rRNA (21S mt-rRNA) and 46 different proteins.</text>
</comment>
<comment type="subcellular location">
    <subcellularLocation>
        <location evidence="3 5">Mitochondrion</location>
    </subcellularLocation>
    <text evidence="7">Mitoribosomes are tethered to the mitochondrial inner membrane and spatially aligned with the membrane insertion machinery through two distinct membrane contact sites, formed by the 21S rRNA expansion segment 96-ES1 and the inner membrane protein MBA1.</text>
</comment>
<comment type="PTM">
    <text evidence="9">The precursor is processed in two steps involving mitochondrial intermediate peptidase (MIP) and mitochondrial processing peptidase (MPP).</text>
</comment>
<comment type="miscellaneous">
    <text evidence="4">Present with 6960 molecules/cell in log phase SD medium.</text>
</comment>
<comment type="similarity">
    <text evidence="11">Belongs to the universal ribosomal protein uS15 family.</text>
</comment>
<organism>
    <name type="scientific">Saccharomyces cerevisiae (strain ATCC 204508 / S288c)</name>
    <name type="common">Baker's yeast</name>
    <dbReference type="NCBI Taxonomy" id="559292"/>
    <lineage>
        <taxon>Eukaryota</taxon>
        <taxon>Fungi</taxon>
        <taxon>Dikarya</taxon>
        <taxon>Ascomycota</taxon>
        <taxon>Saccharomycotina</taxon>
        <taxon>Saccharomycetes</taxon>
        <taxon>Saccharomycetales</taxon>
        <taxon>Saccharomycetaceae</taxon>
        <taxon>Saccharomyces</taxon>
    </lineage>
</organism>
<evidence type="ECO:0000269" key="1">
    <source>
    </source>
</evidence>
<evidence type="ECO:0000269" key="2">
    <source>
    </source>
</evidence>
<evidence type="ECO:0000269" key="3">
    <source>
    </source>
</evidence>
<evidence type="ECO:0000269" key="4">
    <source>
    </source>
</evidence>
<evidence type="ECO:0000269" key="5">
    <source>
    </source>
</evidence>
<evidence type="ECO:0000269" key="6">
    <source>
    </source>
</evidence>
<evidence type="ECO:0000269" key="7">
    <source>
    </source>
</evidence>
<evidence type="ECO:0000269" key="8">
    <source>
    </source>
</evidence>
<evidence type="ECO:0000269" key="9">
    <source>
    </source>
</evidence>
<evidence type="ECO:0000303" key="10">
    <source>
    </source>
</evidence>
<evidence type="ECO:0000305" key="11"/>
<evidence type="ECO:0000305" key="12">
    <source>
    </source>
</evidence>
<evidence type="ECO:0000305" key="13">
    <source>
    </source>
</evidence>
<evidence type="ECO:0007829" key="14">
    <source>
        <dbReference type="PDB" id="8D8K"/>
    </source>
</evidence>
<evidence type="ECO:0007829" key="15">
    <source>
        <dbReference type="PDB" id="8D8L"/>
    </source>
</evidence>
<sequence>MSIVGRNAILNLRISLCPLFMGKRSFVSSPVSNSAKAVKFLKAQRRKQKNEAKQATLKASTDKVDPVLGRADTPFITRIMAELKEPLVLSKGYNIEEVDKFLAAIESAKRERAELSGLNTEVVGIEDIEKLEDRREAILRILSMRNSENKNAIKMAVELARKEFERFPGDTGSSEVQAACMTVRIQNMANHIKEHRKDFANTRNLRILVQQRQAILRYLKRDNPEKYYWTIQKLGLNDAAITDEFNMDRRYMQDYEFFGDKILIRDSKKVANQKRKEIRKQKRATF</sequence>
<protein>
    <recommendedName>
        <fullName evidence="10">Small ribosomal subunit protein uS15m</fullName>
    </recommendedName>
    <alternativeName>
        <fullName>37S ribosomal protein S28, mitochondrial</fullName>
    </alternativeName>
</protein>
<accession>P21771</accession>
<accession>D6VSW9</accession>
<reference key="1">
    <citation type="journal article" date="1990" name="Nucleic Acids Res.">
        <title>Structural and functional analyses of a yeast mitochondrial ribosomal protein homologous to ribosomal protein S15 of Escherichia coli.</title>
        <authorList>
            <person name="Dang H."/>
            <person name="Ellis S.R."/>
        </authorList>
    </citation>
    <scope>NUCLEOTIDE SEQUENCE [GENOMIC DNA]</scope>
    <scope>PROTEIN SEQUENCE OF 34-53</scope>
    <source>
        <strain>ATCC 201238 / W303-1B</strain>
    </source>
</reference>
<reference key="2">
    <citation type="journal article" date="1997" name="Nature">
        <title>The nucleotide sequence of Saccharomyces cerevisiae chromosome IV.</title>
        <authorList>
            <person name="Jacq C."/>
            <person name="Alt-Moerbe J."/>
            <person name="Andre B."/>
            <person name="Arnold W."/>
            <person name="Bahr A."/>
            <person name="Ballesta J.P.G."/>
            <person name="Bargues M."/>
            <person name="Baron L."/>
            <person name="Becker A."/>
            <person name="Biteau N."/>
            <person name="Bloecker H."/>
            <person name="Blugeon C."/>
            <person name="Boskovic J."/>
            <person name="Brandt P."/>
            <person name="Brueckner M."/>
            <person name="Buitrago M.J."/>
            <person name="Coster F."/>
            <person name="Delaveau T."/>
            <person name="del Rey F."/>
            <person name="Dujon B."/>
            <person name="Eide L.G."/>
            <person name="Garcia-Cantalejo J.M."/>
            <person name="Goffeau A."/>
            <person name="Gomez-Peris A."/>
            <person name="Granotier C."/>
            <person name="Hanemann V."/>
            <person name="Hankeln T."/>
            <person name="Hoheisel J.D."/>
            <person name="Jaeger W."/>
            <person name="Jimenez A."/>
            <person name="Jonniaux J.-L."/>
            <person name="Kraemer C."/>
            <person name="Kuester H."/>
            <person name="Laamanen P."/>
            <person name="Legros Y."/>
            <person name="Louis E.J."/>
            <person name="Moeller-Rieker S."/>
            <person name="Monnet A."/>
            <person name="Moro M."/>
            <person name="Mueller-Auer S."/>
            <person name="Nussbaumer B."/>
            <person name="Paricio N."/>
            <person name="Paulin L."/>
            <person name="Perea J."/>
            <person name="Perez-Alonso M."/>
            <person name="Perez-Ortin J.E."/>
            <person name="Pohl T.M."/>
            <person name="Prydz H."/>
            <person name="Purnelle B."/>
            <person name="Rasmussen S.W."/>
            <person name="Remacha M.A."/>
            <person name="Revuelta J.L."/>
            <person name="Rieger M."/>
            <person name="Salom D."/>
            <person name="Saluz H.P."/>
            <person name="Saiz J.E."/>
            <person name="Saren A.-M."/>
            <person name="Schaefer M."/>
            <person name="Scharfe M."/>
            <person name="Schmidt E.R."/>
            <person name="Schneider C."/>
            <person name="Scholler P."/>
            <person name="Schwarz S."/>
            <person name="Soler-Mira A."/>
            <person name="Urrestarazu L.A."/>
            <person name="Verhasselt P."/>
            <person name="Vissers S."/>
            <person name="Voet M."/>
            <person name="Volckaert G."/>
            <person name="Wagner G."/>
            <person name="Wambutt R."/>
            <person name="Wedler E."/>
            <person name="Wedler H."/>
            <person name="Woelfl S."/>
            <person name="Harris D.E."/>
            <person name="Bowman S."/>
            <person name="Brown D."/>
            <person name="Churcher C.M."/>
            <person name="Connor R."/>
            <person name="Dedman K."/>
            <person name="Gentles S."/>
            <person name="Hamlin N."/>
            <person name="Hunt S."/>
            <person name="Jones L."/>
            <person name="McDonald S."/>
            <person name="Murphy L.D."/>
            <person name="Niblett D."/>
            <person name="Odell C."/>
            <person name="Oliver K."/>
            <person name="Rajandream M.A."/>
            <person name="Richards C."/>
            <person name="Shore L."/>
            <person name="Walsh S.V."/>
            <person name="Barrell B.G."/>
            <person name="Dietrich F.S."/>
            <person name="Mulligan J.T."/>
            <person name="Allen E."/>
            <person name="Araujo R."/>
            <person name="Aviles E."/>
            <person name="Berno A."/>
            <person name="Carpenter J."/>
            <person name="Chen E."/>
            <person name="Cherry J.M."/>
            <person name="Chung E."/>
            <person name="Duncan M."/>
            <person name="Hunicke-Smith S."/>
            <person name="Hyman R.W."/>
            <person name="Komp C."/>
            <person name="Lashkari D."/>
            <person name="Lew H."/>
            <person name="Lin D."/>
            <person name="Mosedale D."/>
            <person name="Nakahara K."/>
            <person name="Namath A."/>
            <person name="Oefner P."/>
            <person name="Oh C."/>
            <person name="Petel F.X."/>
            <person name="Roberts D."/>
            <person name="Schramm S."/>
            <person name="Schroeder M."/>
            <person name="Shogren T."/>
            <person name="Shroff N."/>
            <person name="Winant A."/>
            <person name="Yelton M.A."/>
            <person name="Botstein D."/>
            <person name="Davis R.W."/>
            <person name="Johnston M."/>
            <person name="Andrews S."/>
            <person name="Brinkman R."/>
            <person name="Cooper J."/>
            <person name="Ding H."/>
            <person name="Du Z."/>
            <person name="Favello A."/>
            <person name="Fulton L."/>
            <person name="Gattung S."/>
            <person name="Greco T."/>
            <person name="Hallsworth K."/>
            <person name="Hawkins J."/>
            <person name="Hillier L.W."/>
            <person name="Jier M."/>
            <person name="Johnson D."/>
            <person name="Johnston L."/>
            <person name="Kirsten J."/>
            <person name="Kucaba T."/>
            <person name="Langston Y."/>
            <person name="Latreille P."/>
            <person name="Le T."/>
            <person name="Mardis E."/>
            <person name="Menezes S."/>
            <person name="Miller N."/>
            <person name="Nhan M."/>
            <person name="Pauley A."/>
            <person name="Peluso D."/>
            <person name="Rifkin L."/>
            <person name="Riles L."/>
            <person name="Taich A."/>
            <person name="Trevaskis E."/>
            <person name="Vignati D."/>
            <person name="Wilcox L."/>
            <person name="Wohldman P."/>
            <person name="Vaudin M."/>
            <person name="Wilson R."/>
            <person name="Waterston R."/>
            <person name="Albermann K."/>
            <person name="Hani J."/>
            <person name="Heumann K."/>
            <person name="Kleine K."/>
            <person name="Mewes H.-W."/>
            <person name="Zollner A."/>
            <person name="Zaccaria P."/>
        </authorList>
    </citation>
    <scope>NUCLEOTIDE SEQUENCE [LARGE SCALE GENOMIC DNA]</scope>
    <source>
        <strain>ATCC 204508 / S288c</strain>
    </source>
</reference>
<reference key="3">
    <citation type="journal article" date="2014" name="G3 (Bethesda)">
        <title>The reference genome sequence of Saccharomyces cerevisiae: Then and now.</title>
        <authorList>
            <person name="Engel S.R."/>
            <person name="Dietrich F.S."/>
            <person name="Fisk D.G."/>
            <person name="Binkley G."/>
            <person name="Balakrishnan R."/>
            <person name="Costanzo M.C."/>
            <person name="Dwight S.S."/>
            <person name="Hitz B.C."/>
            <person name="Karra K."/>
            <person name="Nash R.S."/>
            <person name="Weng S."/>
            <person name="Wong E.D."/>
            <person name="Lloyd P."/>
            <person name="Skrzypek M.S."/>
            <person name="Miyasato S.R."/>
            <person name="Simison M."/>
            <person name="Cherry J.M."/>
        </authorList>
    </citation>
    <scope>GENOME REANNOTATION</scope>
    <source>
        <strain>ATCC 204508 / S288c</strain>
    </source>
</reference>
<reference key="4">
    <citation type="journal article" date="2007" name="Genome Res.">
        <title>Approaching a complete repository of sequence-verified protein-encoding clones for Saccharomyces cerevisiae.</title>
        <authorList>
            <person name="Hu Y."/>
            <person name="Rolfs A."/>
            <person name="Bhullar B."/>
            <person name="Murthy T.V.S."/>
            <person name="Zhu C."/>
            <person name="Berger M.F."/>
            <person name="Camargo A.A."/>
            <person name="Kelley F."/>
            <person name="McCarron S."/>
            <person name="Jepson D."/>
            <person name="Richardson A."/>
            <person name="Raphael J."/>
            <person name="Moreira D."/>
            <person name="Taycher E."/>
            <person name="Zuo D."/>
            <person name="Mohr S."/>
            <person name="Kane M.F."/>
            <person name="Williamson J."/>
            <person name="Simpson A.J.G."/>
            <person name="Bulyk M.L."/>
            <person name="Harlow E."/>
            <person name="Marsischky G."/>
            <person name="Kolodner R.D."/>
            <person name="LaBaer J."/>
        </authorList>
    </citation>
    <scope>NUCLEOTIDE SEQUENCE [GENOMIC DNA]</scope>
    <source>
        <strain>ATCC 204508 / S288c</strain>
    </source>
</reference>
<reference key="5">
    <citation type="journal article" date="1995" name="J. Biol. Chem.">
        <title>Prediction and identification of new natural substrates of the yeast mitochondrial intermediate peptidase.</title>
        <authorList>
            <person name="Branda S.S."/>
            <person name="Isaya G."/>
        </authorList>
    </citation>
    <scope>CLEAVAGE BY MPP AND MIP</scope>
</reference>
<reference key="6">
    <citation type="journal article" date="2001" name="J. Biol. Chem.">
        <title>Identification of 12 new yeast mitochondrial ribosomal proteins including 6 that have no prokaryotic homologues.</title>
        <authorList>
            <person name="Saveanu C."/>
            <person name="Fromont-Racine M."/>
            <person name="Harington A."/>
            <person name="Ricard F."/>
            <person name="Namane A."/>
            <person name="Jacquier A."/>
        </authorList>
    </citation>
    <scope>IDENTIFICATION IN THE MITOCHONDRIAL RIBOSOMAL SMALL COMPLEX</scope>
    <scope>IDENTIFICATION BY MASS SPECTROMETRY</scope>
</reference>
<reference key="7">
    <citation type="journal article" date="2002" name="Eur. J. Biochem.">
        <title>Tag-mediated isolation of yeast mitochondrial ribosome and mass spectrometric identification of its new components.</title>
        <authorList>
            <person name="Gan X."/>
            <person name="Kitakawa M."/>
            <person name="Yoshino K."/>
            <person name="Oshiro N."/>
            <person name="Yonezawa K."/>
            <person name="Isono K."/>
        </authorList>
    </citation>
    <scope>IDENTIFICATION IN THE MITOCHONDRIAL RIBOSOMAL SMALL COMPLEX</scope>
    <scope>IDENTIFICATION BY MASS SPECTROMETRY</scope>
</reference>
<reference key="8">
    <citation type="journal article" date="2003" name="Nature">
        <title>Global analysis of protein localization in budding yeast.</title>
        <authorList>
            <person name="Huh W.-K."/>
            <person name="Falvo J.V."/>
            <person name="Gerke L.C."/>
            <person name="Carroll A.S."/>
            <person name="Howson R.W."/>
            <person name="Weissman J.S."/>
            <person name="O'Shea E.K."/>
        </authorList>
    </citation>
    <scope>SUBCELLULAR LOCATION [LARGE SCALE ANALYSIS]</scope>
</reference>
<reference key="9">
    <citation type="journal article" date="2003" name="Nature">
        <title>Global analysis of protein expression in yeast.</title>
        <authorList>
            <person name="Ghaemmaghami S."/>
            <person name="Huh W.-K."/>
            <person name="Bower K."/>
            <person name="Howson R.W."/>
            <person name="Belle A."/>
            <person name="Dephoure N."/>
            <person name="O'Shea E.K."/>
            <person name="Weissman J.S."/>
        </authorList>
    </citation>
    <scope>LEVEL OF PROTEIN EXPRESSION [LARGE SCALE ANALYSIS]</scope>
</reference>
<reference key="10">
    <citation type="journal article" date="2003" name="Proc. Natl. Acad. Sci. U.S.A.">
        <title>The proteome of Saccharomyces cerevisiae mitochondria.</title>
        <authorList>
            <person name="Sickmann A."/>
            <person name="Reinders J."/>
            <person name="Wagner Y."/>
            <person name="Joppich C."/>
            <person name="Zahedi R.P."/>
            <person name="Meyer H.E."/>
            <person name="Schoenfisch B."/>
            <person name="Perschil I."/>
            <person name="Chacinska A."/>
            <person name="Guiard B."/>
            <person name="Rehling P."/>
            <person name="Pfanner N."/>
            <person name="Meisinger C."/>
        </authorList>
    </citation>
    <scope>SUBCELLULAR LOCATION [LARGE SCALE ANALYSIS]</scope>
    <source>
        <strain>ATCC 76625 / YPH499</strain>
    </source>
</reference>
<reference key="11">
    <citation type="journal article" date="2015" name="Nat. Commun.">
        <title>Organization of the mitochondrial translation machinery studied in situ by cryoelectron tomography.</title>
        <authorList>
            <person name="Pfeffer S."/>
            <person name="Woellhaf M.W."/>
            <person name="Herrmann J.M."/>
            <person name="Forster F."/>
        </authorList>
    </citation>
    <scope>SUBCELLULAR LOCATION</scope>
</reference>
<reference key="12">
    <citation type="journal article" date="2017" name="Science">
        <title>The structure of the yeast mitochondrial ribosome.</title>
        <authorList>
            <person name="Desai N."/>
            <person name="Brown A."/>
            <person name="Amunts A."/>
            <person name="Ramakrishnan V."/>
        </authorList>
    </citation>
    <scope>STRUCTURE BY ELECTRON MICROSCOPY (3.25 ANGSTROMS)</scope>
    <scope>SUBUNIT</scope>
</reference>
<name>RT28_YEAST</name>
<dbReference type="EMBL" id="X55977">
    <property type="protein sequence ID" value="CAA39447.1"/>
    <property type="molecule type" value="Genomic_DNA"/>
</dbReference>
<dbReference type="EMBL" id="M38016">
    <property type="protein sequence ID" value="AAA74730.1"/>
    <property type="molecule type" value="Genomic_DNA"/>
</dbReference>
<dbReference type="EMBL" id="U51032">
    <property type="protein sequence ID" value="AAB64773.1"/>
    <property type="molecule type" value="Genomic_DNA"/>
</dbReference>
<dbReference type="EMBL" id="AY557743">
    <property type="protein sequence ID" value="AAS56069.1"/>
    <property type="molecule type" value="Genomic_DNA"/>
</dbReference>
<dbReference type="EMBL" id="BK006938">
    <property type="protein sequence ID" value="DAA12179.1"/>
    <property type="molecule type" value="Genomic_DNA"/>
</dbReference>
<dbReference type="PIR" id="S12797">
    <property type="entry name" value="S12797"/>
</dbReference>
<dbReference type="RefSeq" id="NP_010624.3">
    <property type="nucleotide sequence ID" value="NM_001180645.3"/>
</dbReference>
<dbReference type="PDB" id="5MRC">
    <property type="method" value="EM"/>
    <property type="resolution" value="3.25 A"/>
    <property type="chains" value="OO=34-286"/>
</dbReference>
<dbReference type="PDB" id="5MRE">
    <property type="method" value="EM"/>
    <property type="resolution" value="3.75 A"/>
    <property type="chains" value="OO=34-286"/>
</dbReference>
<dbReference type="PDB" id="5MRF">
    <property type="method" value="EM"/>
    <property type="resolution" value="4.97 A"/>
    <property type="chains" value="OO=34-286"/>
</dbReference>
<dbReference type="PDB" id="8D8J">
    <property type="method" value="EM"/>
    <property type="resolution" value="3.80 A"/>
    <property type="chains" value="O=1-286"/>
</dbReference>
<dbReference type="PDB" id="8D8K">
    <property type="method" value="EM"/>
    <property type="resolution" value="3.13 A"/>
    <property type="chains" value="O=1-286"/>
</dbReference>
<dbReference type="PDB" id="8D8L">
    <property type="method" value="EM"/>
    <property type="resolution" value="2.60 A"/>
    <property type="chains" value="O=1-286"/>
</dbReference>
<dbReference type="PDB" id="8OM2">
    <property type="method" value="EM"/>
    <property type="resolution" value="2.57 A"/>
    <property type="chains" value="O=1-286"/>
</dbReference>
<dbReference type="PDB" id="8OM3">
    <property type="method" value="EM"/>
    <property type="resolution" value="2.87 A"/>
    <property type="chains" value="O=1-286"/>
</dbReference>
<dbReference type="PDB" id="8OM4">
    <property type="method" value="EM"/>
    <property type="resolution" value="2.32 A"/>
    <property type="chains" value="O=1-286"/>
</dbReference>
<dbReference type="PDBsum" id="5MRC"/>
<dbReference type="PDBsum" id="5MRE"/>
<dbReference type="PDBsum" id="5MRF"/>
<dbReference type="PDBsum" id="8D8J"/>
<dbReference type="PDBsum" id="8D8K"/>
<dbReference type="PDBsum" id="8D8L"/>
<dbReference type="PDBsum" id="8OM2"/>
<dbReference type="PDBsum" id="8OM3"/>
<dbReference type="PDBsum" id="8OM4"/>
<dbReference type="EMDB" id="EMD-16966"/>
<dbReference type="EMDB" id="EMD-16967"/>
<dbReference type="EMDB" id="EMD-16968"/>
<dbReference type="EMDB" id="EMD-27249"/>
<dbReference type="EMDB" id="EMD-27250"/>
<dbReference type="EMDB" id="EMD-27251"/>
<dbReference type="EMDB" id="EMD-3551"/>
<dbReference type="EMDB" id="EMD-3552"/>
<dbReference type="EMDB" id="EMD-3553"/>
<dbReference type="SMR" id="P21771"/>
<dbReference type="BioGRID" id="32394">
    <property type="interactions" value="150"/>
</dbReference>
<dbReference type="ComplexPortal" id="CPX-1603">
    <property type="entry name" value="37S mitochondrial small ribosomal subunit"/>
</dbReference>
<dbReference type="DIP" id="DIP-3889N"/>
<dbReference type="FunCoup" id="P21771">
    <property type="interactions" value="363"/>
</dbReference>
<dbReference type="IntAct" id="P21771">
    <property type="interactions" value="41"/>
</dbReference>
<dbReference type="MINT" id="P21771"/>
<dbReference type="STRING" id="4932.YDR337W"/>
<dbReference type="PaxDb" id="4932-YDR337W"/>
<dbReference type="PeptideAtlas" id="P21771"/>
<dbReference type="EnsemblFungi" id="YDR337W_mRNA">
    <property type="protein sequence ID" value="YDR337W"/>
    <property type="gene ID" value="YDR337W"/>
</dbReference>
<dbReference type="GeneID" id="851937"/>
<dbReference type="KEGG" id="sce:YDR337W"/>
<dbReference type="AGR" id="SGD:S000002745"/>
<dbReference type="SGD" id="S000002745">
    <property type="gene designation" value="MRPS28"/>
</dbReference>
<dbReference type="VEuPathDB" id="FungiDB:YDR337W"/>
<dbReference type="eggNOG" id="KOG2815">
    <property type="taxonomic scope" value="Eukaryota"/>
</dbReference>
<dbReference type="GeneTree" id="ENSGT00390000001737"/>
<dbReference type="HOGENOM" id="CLU_073662_0_0_1"/>
<dbReference type="InParanoid" id="P21771"/>
<dbReference type="OMA" id="FNMGRQY"/>
<dbReference type="OrthoDB" id="441444at2759"/>
<dbReference type="BioCyc" id="YEAST:G3O-29893-MONOMER"/>
<dbReference type="BioGRID-ORCS" id="851937">
    <property type="hits" value="1 hit in 10 CRISPR screens"/>
</dbReference>
<dbReference type="PRO" id="PR:P21771"/>
<dbReference type="Proteomes" id="UP000002311">
    <property type="component" value="Chromosome IV"/>
</dbReference>
<dbReference type="RNAct" id="P21771">
    <property type="molecule type" value="protein"/>
</dbReference>
<dbReference type="GO" id="GO:0005743">
    <property type="term" value="C:mitochondrial inner membrane"/>
    <property type="evidence" value="ECO:0000303"/>
    <property type="project" value="ComplexPortal"/>
</dbReference>
<dbReference type="GO" id="GO:0005763">
    <property type="term" value="C:mitochondrial small ribosomal subunit"/>
    <property type="evidence" value="ECO:0000314"/>
    <property type="project" value="SGD"/>
</dbReference>
<dbReference type="GO" id="GO:0005739">
    <property type="term" value="C:mitochondrion"/>
    <property type="evidence" value="ECO:0007005"/>
    <property type="project" value="SGD"/>
</dbReference>
<dbReference type="GO" id="GO:0019843">
    <property type="term" value="F:rRNA binding"/>
    <property type="evidence" value="ECO:0007669"/>
    <property type="project" value="UniProtKB-KW"/>
</dbReference>
<dbReference type="GO" id="GO:0003735">
    <property type="term" value="F:structural constituent of ribosome"/>
    <property type="evidence" value="ECO:0000314"/>
    <property type="project" value="SGD"/>
</dbReference>
<dbReference type="GO" id="GO:0032543">
    <property type="term" value="P:mitochondrial translation"/>
    <property type="evidence" value="ECO:0000303"/>
    <property type="project" value="ComplexPortal"/>
</dbReference>
<dbReference type="CDD" id="cd00353">
    <property type="entry name" value="Ribosomal_S15p_S13e"/>
    <property type="match status" value="1"/>
</dbReference>
<dbReference type="FunFam" id="1.10.287.10:FF:000021">
    <property type="entry name" value="Mrps28p"/>
    <property type="match status" value="1"/>
</dbReference>
<dbReference type="Gene3D" id="1.10.287.10">
    <property type="entry name" value="S15/NS1, RNA-binding"/>
    <property type="match status" value="1"/>
</dbReference>
<dbReference type="HAMAP" id="MF_01343_B">
    <property type="entry name" value="Ribosomal_uS15_B"/>
    <property type="match status" value="1"/>
</dbReference>
<dbReference type="InterPro" id="IPR000589">
    <property type="entry name" value="Ribosomal_uS15"/>
</dbReference>
<dbReference type="InterPro" id="IPR005290">
    <property type="entry name" value="Ribosomal_uS15_bac-type"/>
</dbReference>
<dbReference type="InterPro" id="IPR009068">
    <property type="entry name" value="uS15_NS1_RNA-bd_sf"/>
</dbReference>
<dbReference type="NCBIfam" id="TIGR00952">
    <property type="entry name" value="S15_bact"/>
    <property type="match status" value="1"/>
</dbReference>
<dbReference type="PANTHER" id="PTHR23321">
    <property type="entry name" value="RIBOSOMAL PROTEIN S15, BACTERIAL AND ORGANELLAR"/>
    <property type="match status" value="1"/>
</dbReference>
<dbReference type="PANTHER" id="PTHR23321:SF26">
    <property type="entry name" value="SMALL RIBOSOMAL SUBUNIT PROTEIN US15M"/>
    <property type="match status" value="1"/>
</dbReference>
<dbReference type="Pfam" id="PF00312">
    <property type="entry name" value="Ribosomal_S15"/>
    <property type="match status" value="1"/>
</dbReference>
<dbReference type="SMART" id="SM01387">
    <property type="entry name" value="Ribosomal_S15"/>
    <property type="match status" value="1"/>
</dbReference>
<dbReference type="SUPFAM" id="SSF47060">
    <property type="entry name" value="S15/NS1 RNA-binding domain"/>
    <property type="match status" value="1"/>
</dbReference>
<dbReference type="PROSITE" id="PS00362">
    <property type="entry name" value="RIBOSOMAL_S15"/>
    <property type="match status" value="1"/>
</dbReference>
<feature type="transit peptide" description="Mitochondrion" evidence="6">
    <location>
        <begin position="1"/>
        <end position="33"/>
    </location>
</feature>
<feature type="chain" id="PRO_0000030613" description="Small ribosomal subunit protein uS15m">
    <location>
        <begin position="34"/>
        <end position="286"/>
    </location>
</feature>
<feature type="helix" evidence="15">
    <location>
        <begin position="35"/>
        <end position="59"/>
    </location>
</feature>
<feature type="turn" evidence="15">
    <location>
        <begin position="66"/>
        <end position="68"/>
    </location>
</feature>
<feature type="strand" evidence="14">
    <location>
        <begin position="69"/>
        <end position="72"/>
    </location>
</feature>
<feature type="helix" evidence="15">
    <location>
        <begin position="74"/>
        <end position="83"/>
    </location>
</feature>
<feature type="helix" evidence="15">
    <location>
        <begin position="95"/>
        <end position="111"/>
    </location>
</feature>
<feature type="helix" evidence="15">
    <location>
        <begin position="129"/>
        <end position="142"/>
    </location>
</feature>
<feature type="helix" evidence="15">
    <location>
        <begin position="144"/>
        <end position="146"/>
    </location>
</feature>
<feature type="helix" evidence="15">
    <location>
        <begin position="149"/>
        <end position="164"/>
    </location>
</feature>
<feature type="helix" evidence="15">
    <location>
        <begin position="174"/>
        <end position="194"/>
    </location>
</feature>
<feature type="helix" evidence="15">
    <location>
        <begin position="199"/>
        <end position="222"/>
    </location>
</feature>
<feature type="helix" evidence="15">
    <location>
        <begin position="224"/>
        <end position="234"/>
    </location>
</feature>
<feature type="helix" evidence="15">
    <location>
        <begin position="238"/>
        <end position="242"/>
    </location>
</feature>
<feature type="helix" evidence="15">
    <location>
        <begin position="249"/>
        <end position="254"/>
    </location>
</feature>
<gene>
    <name type="primary">MRPS28</name>
    <name type="ordered locus">YDR337W</name>
    <name type="ORF">D9651.3</name>
</gene>
<proteinExistence type="evidence at protein level"/>
<keyword id="KW-0002">3D-structure</keyword>
<keyword id="KW-0903">Direct protein sequencing</keyword>
<keyword id="KW-0496">Mitochondrion</keyword>
<keyword id="KW-1185">Reference proteome</keyword>
<keyword id="KW-0687">Ribonucleoprotein</keyword>
<keyword id="KW-0689">Ribosomal protein</keyword>
<keyword id="KW-0694">RNA-binding</keyword>
<keyword id="KW-0699">rRNA-binding</keyword>
<keyword id="KW-0809">Transit peptide</keyword>